<dbReference type="EC" id="1.97.1.12" evidence="1"/>
<dbReference type="EMBL" id="AB197035">
    <property type="protein sequence ID" value="BAE00251.1"/>
    <property type="molecule type" value="Genomic_DNA"/>
</dbReference>
<dbReference type="RefSeq" id="YP_009584231.1">
    <property type="nucleotide sequence ID" value="NC_041575.1"/>
</dbReference>
<dbReference type="SMR" id="Q2WGC5"/>
<dbReference type="GeneID" id="39713387"/>
<dbReference type="GO" id="GO:0009535">
    <property type="term" value="C:chloroplast thylakoid membrane"/>
    <property type="evidence" value="ECO:0007669"/>
    <property type="project" value="UniProtKB-SubCell"/>
</dbReference>
<dbReference type="GO" id="GO:0009522">
    <property type="term" value="C:photosystem I"/>
    <property type="evidence" value="ECO:0007669"/>
    <property type="project" value="UniProtKB-KW"/>
</dbReference>
<dbReference type="GO" id="GO:0051539">
    <property type="term" value="F:4 iron, 4 sulfur cluster binding"/>
    <property type="evidence" value="ECO:0007669"/>
    <property type="project" value="UniProtKB-KW"/>
</dbReference>
<dbReference type="GO" id="GO:0016168">
    <property type="term" value="F:chlorophyll binding"/>
    <property type="evidence" value="ECO:0007669"/>
    <property type="project" value="UniProtKB-KW"/>
</dbReference>
<dbReference type="GO" id="GO:0009055">
    <property type="term" value="F:electron transfer activity"/>
    <property type="evidence" value="ECO:0007669"/>
    <property type="project" value="UniProtKB-UniRule"/>
</dbReference>
<dbReference type="GO" id="GO:0000287">
    <property type="term" value="F:magnesium ion binding"/>
    <property type="evidence" value="ECO:0007669"/>
    <property type="project" value="UniProtKB-UniRule"/>
</dbReference>
<dbReference type="GO" id="GO:0016491">
    <property type="term" value="F:oxidoreductase activity"/>
    <property type="evidence" value="ECO:0007669"/>
    <property type="project" value="UniProtKB-KW"/>
</dbReference>
<dbReference type="GO" id="GO:0015979">
    <property type="term" value="P:photosynthesis"/>
    <property type="evidence" value="ECO:0007669"/>
    <property type="project" value="UniProtKB-UniRule"/>
</dbReference>
<dbReference type="FunFam" id="1.20.1130.10:FF:000001">
    <property type="entry name" value="Photosystem I P700 chlorophyll a apoprotein A2"/>
    <property type="match status" value="1"/>
</dbReference>
<dbReference type="Gene3D" id="1.20.1130.10">
    <property type="entry name" value="Photosystem I PsaA/PsaB"/>
    <property type="match status" value="1"/>
</dbReference>
<dbReference type="HAMAP" id="MF_00482">
    <property type="entry name" value="PSI_PsaB"/>
    <property type="match status" value="1"/>
</dbReference>
<dbReference type="InterPro" id="IPR001280">
    <property type="entry name" value="PSI_PsaA/B"/>
</dbReference>
<dbReference type="InterPro" id="IPR020586">
    <property type="entry name" value="PSI_PsaA/B_CS"/>
</dbReference>
<dbReference type="InterPro" id="IPR036408">
    <property type="entry name" value="PSI_PsaA/B_sf"/>
</dbReference>
<dbReference type="InterPro" id="IPR006244">
    <property type="entry name" value="PSI_PsaB"/>
</dbReference>
<dbReference type="NCBIfam" id="TIGR01336">
    <property type="entry name" value="psaB"/>
    <property type="match status" value="1"/>
</dbReference>
<dbReference type="PANTHER" id="PTHR30128">
    <property type="entry name" value="OUTER MEMBRANE PROTEIN, OMPA-RELATED"/>
    <property type="match status" value="1"/>
</dbReference>
<dbReference type="PANTHER" id="PTHR30128:SF19">
    <property type="entry name" value="PHOTOSYSTEM I P700 CHLOROPHYLL A APOPROTEIN A1-RELATED"/>
    <property type="match status" value="1"/>
</dbReference>
<dbReference type="Pfam" id="PF00223">
    <property type="entry name" value="PsaA_PsaB"/>
    <property type="match status" value="1"/>
</dbReference>
<dbReference type="PIRSF" id="PIRSF002905">
    <property type="entry name" value="PSI_A"/>
    <property type="match status" value="1"/>
</dbReference>
<dbReference type="PRINTS" id="PR00257">
    <property type="entry name" value="PHOTSYSPSAAB"/>
</dbReference>
<dbReference type="SUPFAM" id="SSF81558">
    <property type="entry name" value="Photosystem I subunits PsaA/PsaB"/>
    <property type="match status" value="1"/>
</dbReference>
<dbReference type="PROSITE" id="PS00419">
    <property type="entry name" value="PHOTOSYSTEM_I_PSAAB"/>
    <property type="match status" value="1"/>
</dbReference>
<gene>
    <name evidence="1" type="primary">psaB</name>
</gene>
<sequence>MALRSPKSSRGLSQDPTTRRIWFGIATAHDFESHDGMTEERLYQNIFASHLGQLAIIFLWTSGNLFHVAWQGNSEARIKDPLHVRPIAHAIWDPHFGQPAVEAFARGGGLGPVNIAYPGVYQRWYTIGMRTDQDLYTGAFSLLIVSTLFLVAGWLHLEPKWAPSISWFKNAESRLNHHLSGLFGVSSLARAGHLVHVAIPESRGGHVRWGNLLSASPHPQGLGPLSAGQWGVYARDVDSSSHLFNTSQGAGTAIPTFTGGFHPQTQSPWLTDIAHHHLAIAVVFIIAGHTYRTNFGIGHSIGGALEAHIPPGGRLGRGHQGLYDTINNSLHFQLGLALASLGVVTSLVAQHMYSLPAYAFIAQDFTTQAALYTHHQYIAGFIMTGAFAHGAIFLTRDYSPERGRGNVLARVLEHKEAIISHLSWASLFLGFHTLGLYVHNDVMLAFGTPEKQILIEPVFAQWIQSAHGKASYGFDVLLSSPNDPAFNAGRSIWLPGRLDAIDNNSNSLFLTIGPGDFPVHHAIASGLHTTTLILSKGALDARGSKLMPDKKEFGYGFPCDGPGRGGTCDISAWDAFYPAVFWMLNTIGWVTLHWHWKHITLWQGNVAQLDESSTYLMGWSRDYSWLNSSQLINGYNPFGTNSLSVWAWMFSFGHLVWATGFMFLIPRRGYWQELIETLARAHERTPLANLVRWGDKPVALSIVQARLVGLAHFSVGYIFTYAAFPIPSTAGKFG</sequence>
<name>PSAB_SELUN</name>
<keyword id="KW-0004">4Fe-4S</keyword>
<keyword id="KW-0148">Chlorophyll</keyword>
<keyword id="KW-0150">Chloroplast</keyword>
<keyword id="KW-0157">Chromophore</keyword>
<keyword id="KW-0249">Electron transport</keyword>
<keyword id="KW-0408">Iron</keyword>
<keyword id="KW-0411">Iron-sulfur</keyword>
<keyword id="KW-0460">Magnesium</keyword>
<keyword id="KW-0472">Membrane</keyword>
<keyword id="KW-0479">Metal-binding</keyword>
<keyword id="KW-0560">Oxidoreductase</keyword>
<keyword id="KW-0602">Photosynthesis</keyword>
<keyword id="KW-0603">Photosystem I</keyword>
<keyword id="KW-0934">Plastid</keyword>
<keyword id="KW-0793">Thylakoid</keyword>
<keyword id="KW-0812">Transmembrane</keyword>
<keyword id="KW-1133">Transmembrane helix</keyword>
<keyword id="KW-0813">Transport</keyword>
<geneLocation type="chloroplast"/>
<comment type="function">
    <text evidence="1">PsaA and PsaB bind P700, the primary electron donor of photosystem I (PSI), as well as the electron acceptors A0, A1 and FX. PSI is a plastocyanin-ferredoxin oxidoreductase, converting photonic excitation into a charge separation, which transfers an electron from the donor P700 chlorophyll pair to the spectroscopically characterized acceptors A0, A1, FX, FA and FB in turn. Oxidized P700 is reduced on the lumenal side of the thylakoid membrane by plastocyanin.</text>
</comment>
<comment type="catalytic activity">
    <reaction evidence="1">
        <text>reduced [plastocyanin] + hnu + oxidized [2Fe-2S]-[ferredoxin] = oxidized [plastocyanin] + reduced [2Fe-2S]-[ferredoxin]</text>
        <dbReference type="Rhea" id="RHEA:30407"/>
        <dbReference type="Rhea" id="RHEA-COMP:10000"/>
        <dbReference type="Rhea" id="RHEA-COMP:10001"/>
        <dbReference type="Rhea" id="RHEA-COMP:10039"/>
        <dbReference type="Rhea" id="RHEA-COMP:10040"/>
        <dbReference type="ChEBI" id="CHEBI:29036"/>
        <dbReference type="ChEBI" id="CHEBI:30212"/>
        <dbReference type="ChEBI" id="CHEBI:33737"/>
        <dbReference type="ChEBI" id="CHEBI:33738"/>
        <dbReference type="ChEBI" id="CHEBI:49552"/>
        <dbReference type="EC" id="1.97.1.12"/>
    </reaction>
</comment>
<comment type="cofactor">
    <text evidence="1">P700 is a chlorophyll a/chlorophyll a' dimer, A0 is one or more chlorophyll a, A1 is one or both phylloquinones and FX is a shared 4Fe-4S iron-sulfur center.</text>
</comment>
<comment type="subunit">
    <text evidence="1">The PsaA/B heterodimer binds the P700 chlorophyll special pair and subsequent electron acceptors. PSI consists of a core antenna complex that captures photons, and an electron transfer chain that converts photonic excitation into a charge separation. The eukaryotic PSI reaction center is composed of at least 11 subunits.</text>
</comment>
<comment type="subcellular location">
    <subcellularLocation>
        <location>Plastid</location>
        <location>Chloroplast thylakoid membrane</location>
        <topology>Multi-pass membrane protein</topology>
    </subcellularLocation>
</comment>
<comment type="similarity">
    <text evidence="1">Belongs to the PsaA/PsaB family.</text>
</comment>
<organism>
    <name type="scientific">Selaginella uncinata</name>
    <name type="common">Blue spike-moss</name>
    <name type="synonym">Lycopodium uncinatum</name>
    <dbReference type="NCBI Taxonomy" id="307165"/>
    <lineage>
        <taxon>Eukaryota</taxon>
        <taxon>Viridiplantae</taxon>
        <taxon>Streptophyta</taxon>
        <taxon>Embryophyta</taxon>
        <taxon>Tracheophyta</taxon>
        <taxon>Lycopodiopsida</taxon>
        <taxon>Selaginellales</taxon>
        <taxon>Selaginellaceae</taxon>
        <taxon>Selaginella</taxon>
    </lineage>
</organism>
<reference key="1">
    <citation type="journal article" date="2007" name="J. Plant Res.">
        <title>The chloroplast genome from a lycophyte (microphyllophyte), Selaginella uncinata, has a unique inversion, transpositions and many gene losses.</title>
        <authorList>
            <person name="Tsuji S."/>
            <person name="Ueda K."/>
            <person name="Nishiyama T."/>
            <person name="Hasebe M."/>
            <person name="Yoshikawa S."/>
            <person name="Konagaya A."/>
            <person name="Nishiuchi T."/>
            <person name="Yamaguchi K."/>
        </authorList>
    </citation>
    <scope>NUCLEOTIDE SEQUENCE [LARGE SCALE GENOMIC DNA]</scope>
</reference>
<proteinExistence type="inferred from homology"/>
<evidence type="ECO:0000255" key="1">
    <source>
        <dbReference type="HAMAP-Rule" id="MF_00482"/>
    </source>
</evidence>
<accession>Q2WGC5</accession>
<feature type="chain" id="PRO_0000275973" description="Photosystem I P700 chlorophyll a apoprotein A2">
    <location>
        <begin position="1"/>
        <end position="734"/>
    </location>
</feature>
<feature type="transmembrane region" description="Helical; Name=I" evidence="1">
    <location>
        <begin position="46"/>
        <end position="69"/>
    </location>
</feature>
<feature type="transmembrane region" description="Helical; Name=II" evidence="1">
    <location>
        <begin position="135"/>
        <end position="158"/>
    </location>
</feature>
<feature type="transmembrane region" description="Helical; Name=III" evidence="1">
    <location>
        <begin position="175"/>
        <end position="199"/>
    </location>
</feature>
<feature type="transmembrane region" description="Helical; Name=IV" evidence="1">
    <location>
        <begin position="273"/>
        <end position="291"/>
    </location>
</feature>
<feature type="transmembrane region" description="Helical; Name=V" evidence="1">
    <location>
        <begin position="330"/>
        <end position="353"/>
    </location>
</feature>
<feature type="transmembrane region" description="Helical; Name=VI" evidence="1">
    <location>
        <begin position="369"/>
        <end position="395"/>
    </location>
</feature>
<feature type="transmembrane region" description="Helical; Name=VII" evidence="1">
    <location>
        <begin position="417"/>
        <end position="439"/>
    </location>
</feature>
<feature type="transmembrane region" description="Helical; Name=VIII" evidence="1">
    <location>
        <begin position="517"/>
        <end position="535"/>
    </location>
</feature>
<feature type="transmembrane region" description="Helical; Name=IX" evidence="1">
    <location>
        <begin position="575"/>
        <end position="596"/>
    </location>
</feature>
<feature type="transmembrane region" description="Helical; Name=X" evidence="1">
    <location>
        <begin position="643"/>
        <end position="665"/>
    </location>
</feature>
<feature type="transmembrane region" description="Helical; Name=XI" evidence="1">
    <location>
        <begin position="707"/>
        <end position="727"/>
    </location>
</feature>
<feature type="binding site" evidence="1">
    <location>
        <position position="559"/>
    </location>
    <ligand>
        <name>[4Fe-4S] cluster</name>
        <dbReference type="ChEBI" id="CHEBI:49883"/>
        <note>ligand shared between dimeric partners</note>
    </ligand>
</feature>
<feature type="binding site" evidence="1">
    <location>
        <position position="568"/>
    </location>
    <ligand>
        <name>[4Fe-4S] cluster</name>
        <dbReference type="ChEBI" id="CHEBI:49883"/>
        <note>ligand shared between dimeric partners</note>
    </ligand>
</feature>
<feature type="binding site" description="axial binding residue" evidence="1">
    <location>
        <position position="654"/>
    </location>
    <ligand>
        <name>chlorophyll a</name>
        <dbReference type="ChEBI" id="CHEBI:58416"/>
        <label>B1</label>
    </ligand>
    <ligandPart>
        <name>Mg</name>
        <dbReference type="ChEBI" id="CHEBI:25107"/>
    </ligandPart>
</feature>
<feature type="binding site" description="axial binding residue" evidence="1">
    <location>
        <position position="662"/>
    </location>
    <ligand>
        <name>chlorophyll a</name>
        <dbReference type="ChEBI" id="CHEBI:58416"/>
        <label>B3</label>
    </ligand>
    <ligandPart>
        <name>Mg</name>
        <dbReference type="ChEBI" id="CHEBI:25107"/>
    </ligandPart>
</feature>
<feature type="binding site" evidence="1">
    <location>
        <position position="670"/>
    </location>
    <ligand>
        <name>chlorophyll a</name>
        <dbReference type="ChEBI" id="CHEBI:58416"/>
        <label>B3</label>
    </ligand>
</feature>
<feature type="binding site" evidence="1">
    <location>
        <position position="671"/>
    </location>
    <ligand>
        <name>phylloquinone</name>
        <dbReference type="ChEBI" id="CHEBI:18067"/>
        <label>B</label>
    </ligand>
</feature>
<protein>
    <recommendedName>
        <fullName evidence="1">Photosystem I P700 chlorophyll a apoprotein A2</fullName>
        <ecNumber evidence="1">1.97.1.12</ecNumber>
    </recommendedName>
    <alternativeName>
        <fullName evidence="1">PSI-B</fullName>
    </alternativeName>
    <alternativeName>
        <fullName evidence="1">PsaB</fullName>
    </alternativeName>
</protein>